<sequence length="446" mass="49770">MQPVNIIGGGLAGSEAAWQLASRQIPVRLFEMRGREKTPAHSTDKLAELVCSNSFRSDDPNSNAVGVLHAEMRKMGSLIMMIADQHRVPAGSALAVDREGFAEAVTNRLQNHPLIEIHRERIDHIPDETTIIASGPLTSDSLANAITELTGRDALSFFDAIAPIVYRDSIDMDIAWFQSRWDKGDGHDYINCPLNKEEYLAFHAALLAGEKGDFHEWEKDTPYFEGCMPIEVMADRGIDTLRFGPMKPVGLDDPRTGRWPYGAVQLRQDNALGTLWNMVGFQTKLKYAEQIRIFRMIPGLEKAEFARLGGMHRNSFIRSPVLLDEYLRLKKQTNIRFAGQITGCEGYIESASIGLLAGIFTAADKLDKKVSSPPVESALGALLGHITKNADPDHYQPMNINFGLFPPISEKHPKKQRKAMMAERARKALDQWISEEAFLKSSILEQ</sequence>
<name>TRMFO_ZYMMO</name>
<comment type="function">
    <text evidence="1">Catalyzes the folate-dependent formation of 5-methyl-uridine at position 54 (M-5-U54) in all tRNAs.</text>
</comment>
<comment type="catalytic activity">
    <reaction evidence="1">
        <text>uridine(54) in tRNA + (6R)-5,10-methylene-5,6,7,8-tetrahydrofolate + NADH + H(+) = 5-methyluridine(54) in tRNA + (6S)-5,6,7,8-tetrahydrofolate + NAD(+)</text>
        <dbReference type="Rhea" id="RHEA:16873"/>
        <dbReference type="Rhea" id="RHEA-COMP:10167"/>
        <dbReference type="Rhea" id="RHEA-COMP:10193"/>
        <dbReference type="ChEBI" id="CHEBI:15378"/>
        <dbReference type="ChEBI" id="CHEBI:15636"/>
        <dbReference type="ChEBI" id="CHEBI:57453"/>
        <dbReference type="ChEBI" id="CHEBI:57540"/>
        <dbReference type="ChEBI" id="CHEBI:57945"/>
        <dbReference type="ChEBI" id="CHEBI:65315"/>
        <dbReference type="ChEBI" id="CHEBI:74447"/>
        <dbReference type="EC" id="2.1.1.74"/>
    </reaction>
</comment>
<comment type="catalytic activity">
    <reaction evidence="1">
        <text>uridine(54) in tRNA + (6R)-5,10-methylene-5,6,7,8-tetrahydrofolate + NADPH + H(+) = 5-methyluridine(54) in tRNA + (6S)-5,6,7,8-tetrahydrofolate + NADP(+)</text>
        <dbReference type="Rhea" id="RHEA:62372"/>
        <dbReference type="Rhea" id="RHEA-COMP:10167"/>
        <dbReference type="Rhea" id="RHEA-COMP:10193"/>
        <dbReference type="ChEBI" id="CHEBI:15378"/>
        <dbReference type="ChEBI" id="CHEBI:15636"/>
        <dbReference type="ChEBI" id="CHEBI:57453"/>
        <dbReference type="ChEBI" id="CHEBI:57783"/>
        <dbReference type="ChEBI" id="CHEBI:58349"/>
        <dbReference type="ChEBI" id="CHEBI:65315"/>
        <dbReference type="ChEBI" id="CHEBI:74447"/>
        <dbReference type="EC" id="2.1.1.74"/>
    </reaction>
</comment>
<comment type="cofactor">
    <cofactor evidence="1">
        <name>FAD</name>
        <dbReference type="ChEBI" id="CHEBI:57692"/>
    </cofactor>
</comment>
<comment type="subcellular location">
    <subcellularLocation>
        <location evidence="1">Cytoplasm</location>
    </subcellularLocation>
</comment>
<comment type="similarity">
    <text evidence="1">Belongs to the MnmG family. TrmFO subfamily.</text>
</comment>
<proteinExistence type="inferred from homology"/>
<dbReference type="EC" id="2.1.1.74" evidence="1"/>
<dbReference type="EMBL" id="AE008692">
    <property type="protein sequence ID" value="AAV89315.1"/>
    <property type="molecule type" value="Genomic_DNA"/>
</dbReference>
<dbReference type="RefSeq" id="WP_011240582.1">
    <property type="nucleotide sequence ID" value="NZ_CP035711.1"/>
</dbReference>
<dbReference type="SMR" id="Q5NPP5"/>
<dbReference type="STRING" id="264203.ZMO0691"/>
<dbReference type="KEGG" id="zmo:ZMO0691"/>
<dbReference type="eggNOG" id="COG1206">
    <property type="taxonomic scope" value="Bacteria"/>
</dbReference>
<dbReference type="HOGENOM" id="CLU_033057_1_0_5"/>
<dbReference type="Proteomes" id="UP000001173">
    <property type="component" value="Chromosome"/>
</dbReference>
<dbReference type="GO" id="GO:0005829">
    <property type="term" value="C:cytosol"/>
    <property type="evidence" value="ECO:0007669"/>
    <property type="project" value="TreeGrafter"/>
</dbReference>
<dbReference type="GO" id="GO:0050660">
    <property type="term" value="F:flavin adenine dinucleotide binding"/>
    <property type="evidence" value="ECO:0007669"/>
    <property type="project" value="UniProtKB-UniRule"/>
</dbReference>
<dbReference type="GO" id="GO:0047151">
    <property type="term" value="F:tRNA (uracil(54)-C5)-methyltransferase activity, 5,10-methylenetetrahydrofolate-dependent"/>
    <property type="evidence" value="ECO:0007669"/>
    <property type="project" value="UniProtKB-UniRule"/>
</dbReference>
<dbReference type="GO" id="GO:0030488">
    <property type="term" value="P:tRNA methylation"/>
    <property type="evidence" value="ECO:0007669"/>
    <property type="project" value="TreeGrafter"/>
</dbReference>
<dbReference type="GO" id="GO:0002098">
    <property type="term" value="P:tRNA wobble uridine modification"/>
    <property type="evidence" value="ECO:0007669"/>
    <property type="project" value="TreeGrafter"/>
</dbReference>
<dbReference type="Gene3D" id="3.50.50.60">
    <property type="entry name" value="FAD/NAD(P)-binding domain"/>
    <property type="match status" value="2"/>
</dbReference>
<dbReference type="HAMAP" id="MF_01037">
    <property type="entry name" value="TrmFO"/>
    <property type="match status" value="1"/>
</dbReference>
<dbReference type="InterPro" id="IPR036188">
    <property type="entry name" value="FAD/NAD-bd_sf"/>
</dbReference>
<dbReference type="InterPro" id="IPR002218">
    <property type="entry name" value="MnmG-rel"/>
</dbReference>
<dbReference type="InterPro" id="IPR020595">
    <property type="entry name" value="MnmG-rel_CS"/>
</dbReference>
<dbReference type="InterPro" id="IPR040131">
    <property type="entry name" value="MnmG_N"/>
</dbReference>
<dbReference type="InterPro" id="IPR004417">
    <property type="entry name" value="TrmFO"/>
</dbReference>
<dbReference type="NCBIfam" id="TIGR00137">
    <property type="entry name" value="gid_trmFO"/>
    <property type="match status" value="1"/>
</dbReference>
<dbReference type="NCBIfam" id="NF003739">
    <property type="entry name" value="PRK05335.1"/>
    <property type="match status" value="1"/>
</dbReference>
<dbReference type="PANTHER" id="PTHR11806">
    <property type="entry name" value="GLUCOSE INHIBITED DIVISION PROTEIN A"/>
    <property type="match status" value="1"/>
</dbReference>
<dbReference type="PANTHER" id="PTHR11806:SF2">
    <property type="entry name" value="METHYLENETETRAHYDROFOLATE--TRNA-(URACIL-5-)-METHYLTRANSFERASE TRMFO"/>
    <property type="match status" value="1"/>
</dbReference>
<dbReference type="Pfam" id="PF01134">
    <property type="entry name" value="GIDA"/>
    <property type="match status" value="1"/>
</dbReference>
<dbReference type="SUPFAM" id="SSF51905">
    <property type="entry name" value="FAD/NAD(P)-binding domain"/>
    <property type="match status" value="1"/>
</dbReference>
<dbReference type="PROSITE" id="PS01281">
    <property type="entry name" value="GIDA_2"/>
    <property type="match status" value="1"/>
</dbReference>
<protein>
    <recommendedName>
        <fullName evidence="1">Methylenetetrahydrofolate--tRNA-(uracil-5-)-methyltransferase TrmFO</fullName>
        <ecNumber evidence="1">2.1.1.74</ecNumber>
    </recommendedName>
    <alternativeName>
        <fullName evidence="1">Folate-dependent tRNA (uracil-5-)-methyltransferase</fullName>
    </alternativeName>
    <alternativeName>
        <fullName evidence="1">Folate-dependent tRNA(M-5-U54)-methyltransferase</fullName>
    </alternativeName>
</protein>
<accession>Q5NPP5</accession>
<keyword id="KW-0963">Cytoplasm</keyword>
<keyword id="KW-0274">FAD</keyword>
<keyword id="KW-0285">Flavoprotein</keyword>
<keyword id="KW-0489">Methyltransferase</keyword>
<keyword id="KW-0520">NAD</keyword>
<keyword id="KW-0521">NADP</keyword>
<keyword id="KW-1185">Reference proteome</keyword>
<keyword id="KW-0808">Transferase</keyword>
<keyword id="KW-0819">tRNA processing</keyword>
<reference key="1">
    <citation type="journal article" date="2005" name="Nat. Biotechnol.">
        <title>The genome sequence of the ethanologenic bacterium Zymomonas mobilis ZM4.</title>
        <authorList>
            <person name="Seo J.-S."/>
            <person name="Chong H."/>
            <person name="Park H.S."/>
            <person name="Yoon K.-O."/>
            <person name="Jung C."/>
            <person name="Kim J.J."/>
            <person name="Hong J.H."/>
            <person name="Kim H."/>
            <person name="Kim J.-H."/>
            <person name="Kil J.-I."/>
            <person name="Park C.J."/>
            <person name="Oh H.-M."/>
            <person name="Lee J.-S."/>
            <person name="Jin S.-J."/>
            <person name="Um H.-W."/>
            <person name="Lee H.-J."/>
            <person name="Oh S.-J."/>
            <person name="Kim J.Y."/>
            <person name="Kang H.L."/>
            <person name="Lee S.Y."/>
            <person name="Lee K.J."/>
            <person name="Kang H.S."/>
        </authorList>
    </citation>
    <scope>NUCLEOTIDE SEQUENCE [LARGE SCALE GENOMIC DNA]</scope>
    <source>
        <strain>ATCC 31821 / ZM4 / CP4</strain>
    </source>
</reference>
<evidence type="ECO:0000255" key="1">
    <source>
        <dbReference type="HAMAP-Rule" id="MF_01037"/>
    </source>
</evidence>
<organism>
    <name type="scientific">Zymomonas mobilis subsp. mobilis (strain ATCC 31821 / ZM4 / CP4)</name>
    <dbReference type="NCBI Taxonomy" id="264203"/>
    <lineage>
        <taxon>Bacteria</taxon>
        <taxon>Pseudomonadati</taxon>
        <taxon>Pseudomonadota</taxon>
        <taxon>Alphaproteobacteria</taxon>
        <taxon>Sphingomonadales</taxon>
        <taxon>Zymomonadaceae</taxon>
        <taxon>Zymomonas</taxon>
    </lineage>
</organism>
<feature type="chain" id="PRO_0000117285" description="Methylenetetrahydrofolate--tRNA-(uracil-5-)-methyltransferase TrmFO">
    <location>
        <begin position="1"/>
        <end position="446"/>
    </location>
</feature>
<feature type="binding site" evidence="1">
    <location>
        <begin position="8"/>
        <end position="13"/>
    </location>
    <ligand>
        <name>FAD</name>
        <dbReference type="ChEBI" id="CHEBI:57692"/>
    </ligand>
</feature>
<gene>
    <name evidence="1" type="primary">trmFO</name>
    <name type="synonym">gid</name>
    <name type="ordered locus">ZMO0691</name>
</gene>